<gene>
    <name type="primary">ldha</name>
</gene>
<evidence type="ECO:0000250" key="1"/>
<evidence type="ECO:0000250" key="2">
    <source>
        <dbReference type="UniProtKB" id="P00338"/>
    </source>
</evidence>
<evidence type="ECO:0000305" key="3"/>
<feature type="initiator methionine" description="Removed" evidence="1">
    <location>
        <position position="1"/>
    </location>
</feature>
<feature type="chain" id="PRO_0000168444" description="L-lactate dehydrogenase A chain">
    <location>
        <begin position="2"/>
        <end position="331"/>
    </location>
</feature>
<feature type="active site" description="Proton acceptor" evidence="1">
    <location>
        <position position="192"/>
    </location>
</feature>
<feature type="binding site" evidence="1">
    <location>
        <begin position="29"/>
        <end position="57"/>
    </location>
    <ligand>
        <name>NAD(+)</name>
        <dbReference type="ChEBI" id="CHEBI:57540"/>
    </ligand>
</feature>
<feature type="binding site" evidence="1">
    <location>
        <position position="98"/>
    </location>
    <ligand>
        <name>NAD(+)</name>
        <dbReference type="ChEBI" id="CHEBI:57540"/>
    </ligand>
</feature>
<feature type="binding site" evidence="1">
    <location>
        <position position="105"/>
    </location>
    <ligand>
        <name>substrate</name>
    </ligand>
</feature>
<feature type="binding site" evidence="1">
    <location>
        <position position="137"/>
    </location>
    <ligand>
        <name>NAD(+)</name>
        <dbReference type="ChEBI" id="CHEBI:57540"/>
    </ligand>
</feature>
<feature type="binding site" evidence="1">
    <location>
        <position position="137"/>
    </location>
    <ligand>
        <name>substrate</name>
    </ligand>
</feature>
<feature type="binding site" evidence="1">
    <location>
        <position position="168"/>
    </location>
    <ligand>
        <name>substrate</name>
    </ligand>
</feature>
<feature type="binding site" evidence="1">
    <location>
        <position position="247"/>
    </location>
    <ligand>
        <name>substrate</name>
    </ligand>
</feature>
<accession>P69085</accession>
<accession>Q9PRH8</accession>
<protein>
    <recommendedName>
        <fullName>L-lactate dehydrogenase A chain</fullName>
        <shortName>LDH-A</shortName>
        <ecNumber evidence="2">1.1.1.27</ecNumber>
    </recommendedName>
</protein>
<dbReference type="EC" id="1.1.1.27" evidence="2"/>
<dbReference type="EMBL" id="AF170848">
    <property type="protein sequence ID" value="AAD48488.1"/>
    <property type="molecule type" value="mRNA"/>
</dbReference>
<dbReference type="SMR" id="P69085"/>
<dbReference type="UniPathway" id="UPA00554">
    <property type="reaction ID" value="UER00611"/>
</dbReference>
<dbReference type="GO" id="GO:0005737">
    <property type="term" value="C:cytoplasm"/>
    <property type="evidence" value="ECO:0007669"/>
    <property type="project" value="UniProtKB-SubCell"/>
</dbReference>
<dbReference type="GO" id="GO:0004459">
    <property type="term" value="F:L-lactate dehydrogenase activity"/>
    <property type="evidence" value="ECO:0007669"/>
    <property type="project" value="UniProtKB-EC"/>
</dbReference>
<dbReference type="GO" id="GO:0006089">
    <property type="term" value="P:lactate metabolic process"/>
    <property type="evidence" value="ECO:0007669"/>
    <property type="project" value="TreeGrafter"/>
</dbReference>
<dbReference type="CDD" id="cd05293">
    <property type="entry name" value="LDH_1"/>
    <property type="match status" value="1"/>
</dbReference>
<dbReference type="FunFam" id="3.40.50.720:FF:000029">
    <property type="entry name" value="L-lactate dehydrogenase A chain"/>
    <property type="match status" value="1"/>
</dbReference>
<dbReference type="FunFam" id="3.90.110.10:FF:000003">
    <property type="entry name" value="L-lactate dehydrogenase A chain"/>
    <property type="match status" value="1"/>
</dbReference>
<dbReference type="Gene3D" id="3.90.110.10">
    <property type="entry name" value="Lactate dehydrogenase/glycoside hydrolase, family 4, C-terminal"/>
    <property type="match status" value="1"/>
</dbReference>
<dbReference type="Gene3D" id="3.40.50.720">
    <property type="entry name" value="NAD(P)-binding Rossmann-like Domain"/>
    <property type="match status" value="1"/>
</dbReference>
<dbReference type="HAMAP" id="MF_00488">
    <property type="entry name" value="Lactate_dehydrog"/>
    <property type="match status" value="1"/>
</dbReference>
<dbReference type="InterPro" id="IPR001557">
    <property type="entry name" value="L-lactate/malate_DH"/>
</dbReference>
<dbReference type="InterPro" id="IPR011304">
    <property type="entry name" value="L-lactate_DH"/>
</dbReference>
<dbReference type="InterPro" id="IPR018177">
    <property type="entry name" value="L-lactate_DH_AS"/>
</dbReference>
<dbReference type="InterPro" id="IPR022383">
    <property type="entry name" value="Lactate/malate_DH_C"/>
</dbReference>
<dbReference type="InterPro" id="IPR001236">
    <property type="entry name" value="Lactate/malate_DH_N"/>
</dbReference>
<dbReference type="InterPro" id="IPR015955">
    <property type="entry name" value="Lactate_DH/Glyco_Ohase_4_C"/>
</dbReference>
<dbReference type="InterPro" id="IPR036291">
    <property type="entry name" value="NAD(P)-bd_dom_sf"/>
</dbReference>
<dbReference type="NCBIfam" id="TIGR01771">
    <property type="entry name" value="L-LDH-NAD"/>
    <property type="match status" value="1"/>
</dbReference>
<dbReference type="PANTHER" id="PTHR43128">
    <property type="entry name" value="L-2-HYDROXYCARBOXYLATE DEHYDROGENASE (NAD(P)(+))"/>
    <property type="match status" value="1"/>
</dbReference>
<dbReference type="PANTHER" id="PTHR43128:SF10">
    <property type="entry name" value="L-LACTATE DEHYDROGENASE A CHAIN"/>
    <property type="match status" value="1"/>
</dbReference>
<dbReference type="Pfam" id="PF02866">
    <property type="entry name" value="Ldh_1_C"/>
    <property type="match status" value="1"/>
</dbReference>
<dbReference type="Pfam" id="PF00056">
    <property type="entry name" value="Ldh_1_N"/>
    <property type="match status" value="1"/>
</dbReference>
<dbReference type="PIRSF" id="PIRSF000102">
    <property type="entry name" value="Lac_mal_DH"/>
    <property type="match status" value="1"/>
</dbReference>
<dbReference type="PRINTS" id="PR00086">
    <property type="entry name" value="LLDHDRGNASE"/>
</dbReference>
<dbReference type="SUPFAM" id="SSF56327">
    <property type="entry name" value="LDH C-terminal domain-like"/>
    <property type="match status" value="1"/>
</dbReference>
<dbReference type="SUPFAM" id="SSF51735">
    <property type="entry name" value="NAD(P)-binding Rossmann-fold domains"/>
    <property type="match status" value="1"/>
</dbReference>
<dbReference type="PROSITE" id="PS00064">
    <property type="entry name" value="L_LDH"/>
    <property type="match status" value="1"/>
</dbReference>
<name>LDHA_NOTAN</name>
<proteinExistence type="evidence at transcript level"/>
<keyword id="KW-0963">Cytoplasm</keyword>
<keyword id="KW-0520">NAD</keyword>
<keyword id="KW-0560">Oxidoreductase</keyword>
<comment type="function">
    <text evidence="2">Interconverts simultaneously and stereospecifically pyruvate and lactate with concomitant interconversion of NADH and NAD(+).</text>
</comment>
<comment type="catalytic activity">
    <reaction evidence="2">
        <text>(S)-lactate + NAD(+) = pyruvate + NADH + H(+)</text>
        <dbReference type="Rhea" id="RHEA:23444"/>
        <dbReference type="ChEBI" id="CHEBI:15361"/>
        <dbReference type="ChEBI" id="CHEBI:15378"/>
        <dbReference type="ChEBI" id="CHEBI:16651"/>
        <dbReference type="ChEBI" id="CHEBI:57540"/>
        <dbReference type="ChEBI" id="CHEBI:57945"/>
        <dbReference type="EC" id="1.1.1.27"/>
    </reaction>
    <physiologicalReaction direction="left-to-right" evidence="2">
        <dbReference type="Rhea" id="RHEA:23445"/>
    </physiologicalReaction>
    <physiologicalReaction direction="right-to-left" evidence="2">
        <dbReference type="Rhea" id="RHEA:23446"/>
    </physiologicalReaction>
</comment>
<comment type="pathway">
    <text evidence="2">Fermentation; pyruvate fermentation to lactate; (S)-lactate from pyruvate: step 1/1.</text>
</comment>
<comment type="subunit">
    <text evidence="1">Homotetramer.</text>
</comment>
<comment type="subcellular location">
    <subcellularLocation>
        <location evidence="1">Cytoplasm</location>
    </subcellularLocation>
</comment>
<comment type="similarity">
    <text evidence="3">Belongs to the LDH/MDH superfamily. LDH family.</text>
</comment>
<sequence>MSTKEKLISHVMKEEPVGSRNKVTVVGVGMVGMASAISILLKDLCDELAMVDVMEDKLKGEVMDLQHGSLFLKTKIVGDKDYSVTANSKVVVVTAGARQQEGESRLNLVQRNVNIFKFIIPNIVKYSPNCILMVVSNPVDILTYVAWKLSGFPRHRVIGSGTNLDSARFRHLIGEKLHLHPSSCHAWIVGEHGDSSVPVWSGVNVAGVSLQGLNPQMGTEGDGENWKAIHKEVVDGAYEVIKLKGYTSWAIGMSVADLVESIIKNMHKVHPVSTLVQGMHGVKDEVFLSVPCVLGNSGLTDVIHMTLKAEEEKQVQKSAETLWGVQKELTL</sequence>
<reference key="1">
    <citation type="submission" date="1999-07" db="EMBL/GenBank/DDBJ databases">
        <title>Cold adaptation in lactate dehydrogenases from Antarctic fish.</title>
        <authorList>
            <person name="Marshall C.J."/>
            <person name="Fleming R.I."/>
        </authorList>
    </citation>
    <scope>NUCLEOTIDE SEQUENCE [MRNA]</scope>
    <source>
        <tissue>Skeletal muscle</tissue>
    </source>
</reference>
<organism>
    <name type="scientific">Notothenia angustata</name>
    <name type="common">Rockcod</name>
    <dbReference type="NCBI Taxonomy" id="8210"/>
    <lineage>
        <taxon>Eukaryota</taxon>
        <taxon>Metazoa</taxon>
        <taxon>Chordata</taxon>
        <taxon>Craniata</taxon>
        <taxon>Vertebrata</taxon>
        <taxon>Euteleostomi</taxon>
        <taxon>Actinopterygii</taxon>
        <taxon>Neopterygii</taxon>
        <taxon>Teleostei</taxon>
        <taxon>Neoteleostei</taxon>
        <taxon>Acanthomorphata</taxon>
        <taxon>Eupercaria</taxon>
        <taxon>Perciformes</taxon>
        <taxon>Notothenioidei</taxon>
        <taxon>Nototheniidae</taxon>
        <taxon>Notothenia</taxon>
    </lineage>
</organism>